<sequence length="466" mass="51882">MATVDAILAAKYPAKAHARRVAERLQPHQDGRPGIIYLEAQKTRLIEDNDEPVPFRQRRPFFYLSGCLLPDSSLVYDITEDKLTLFIPPVDPEDVIWSGLPLSTDEALQQYDVDRVSITTEVNSTLASIASAHGGRAVAYNIADQVSPETKFDGFSEINKSVLKGAIEQSRVVKDEYEIALIRKANDISTKAHVAAIKASIIAENEREIEGAFIATCIANGAREQAYHPIVACGENGATLHYGRNSDALIDPVTKKKKRNVLIDAGGEYRTYCSDITRVFPLGGGFTTETRQIYEIVLQMQVECIEMLRDGVQWEEVHAHAHHVAIRGLLELGILRGSEDEIFEKRVSVAFFPHGLGHYLGMDTHDTGGNPNYADKDTMFRYLRVRGRLPAGSVITVEPGIYFCRFIIEPYLKSSESSKYIDTDVLERYWSVGGVRIEDNVLVTKDGYDNLTTTPKTVEEIESLAA</sequence>
<proteinExistence type="inferred from homology"/>
<dbReference type="EC" id="3.4.11.9"/>
<dbReference type="EMBL" id="DS027060">
    <property type="protein sequence ID" value="EAW06267.1"/>
    <property type="molecule type" value="Genomic_DNA"/>
</dbReference>
<dbReference type="RefSeq" id="XP_001267693.1">
    <property type="nucleotide sequence ID" value="XM_001267692.1"/>
</dbReference>
<dbReference type="SMR" id="A1CSI0"/>
<dbReference type="STRING" id="344612.A1CSI0"/>
<dbReference type="MEROPS" id="M24.A09"/>
<dbReference type="EnsemblFungi" id="EAW06267">
    <property type="protein sequence ID" value="EAW06267"/>
    <property type="gene ID" value="ACLA_079510"/>
</dbReference>
<dbReference type="GeneID" id="4700010"/>
<dbReference type="KEGG" id="act:ACLA_079510"/>
<dbReference type="VEuPathDB" id="FungiDB:ACLA_079510"/>
<dbReference type="eggNOG" id="KOG2737">
    <property type="taxonomic scope" value="Eukaryota"/>
</dbReference>
<dbReference type="HOGENOM" id="CLU_017266_1_2_1"/>
<dbReference type="OMA" id="DAHALFF"/>
<dbReference type="OrthoDB" id="10261878at2759"/>
<dbReference type="Proteomes" id="UP000006701">
    <property type="component" value="Unassembled WGS sequence"/>
</dbReference>
<dbReference type="GO" id="GO:0030145">
    <property type="term" value="F:manganese ion binding"/>
    <property type="evidence" value="ECO:0007669"/>
    <property type="project" value="InterPro"/>
</dbReference>
<dbReference type="GO" id="GO:0070006">
    <property type="term" value="F:metalloaminopeptidase activity"/>
    <property type="evidence" value="ECO:0007669"/>
    <property type="project" value="InterPro"/>
</dbReference>
<dbReference type="GO" id="GO:0006508">
    <property type="term" value="P:proteolysis"/>
    <property type="evidence" value="ECO:0007669"/>
    <property type="project" value="UniProtKB-KW"/>
</dbReference>
<dbReference type="CDD" id="cd01087">
    <property type="entry name" value="Prolidase"/>
    <property type="match status" value="1"/>
</dbReference>
<dbReference type="FunFam" id="3.90.230.10:FF:000002">
    <property type="entry name" value="Xaa-Pro aminopeptidase 3"/>
    <property type="match status" value="1"/>
</dbReference>
<dbReference type="Gene3D" id="3.90.230.10">
    <property type="entry name" value="Creatinase/methionine aminopeptidase superfamily"/>
    <property type="match status" value="1"/>
</dbReference>
<dbReference type="Gene3D" id="3.40.350.10">
    <property type="entry name" value="Creatinase/prolidase N-terminal domain"/>
    <property type="match status" value="1"/>
</dbReference>
<dbReference type="InterPro" id="IPR007865">
    <property type="entry name" value="Aminopep_P_N"/>
</dbReference>
<dbReference type="InterPro" id="IPR029149">
    <property type="entry name" value="Creatin/AminoP/Spt16_N"/>
</dbReference>
<dbReference type="InterPro" id="IPR036005">
    <property type="entry name" value="Creatinase/aminopeptidase-like"/>
</dbReference>
<dbReference type="InterPro" id="IPR000994">
    <property type="entry name" value="Pept_M24"/>
</dbReference>
<dbReference type="InterPro" id="IPR052433">
    <property type="entry name" value="X-Pro_dipept-like"/>
</dbReference>
<dbReference type="PANTHER" id="PTHR43226">
    <property type="entry name" value="XAA-PRO AMINOPEPTIDASE 3"/>
    <property type="match status" value="1"/>
</dbReference>
<dbReference type="PANTHER" id="PTHR43226:SF1">
    <property type="entry name" value="XAA-PRO DIPEPTIDASE"/>
    <property type="match status" value="1"/>
</dbReference>
<dbReference type="Pfam" id="PF05195">
    <property type="entry name" value="AMP_N"/>
    <property type="match status" value="1"/>
</dbReference>
<dbReference type="Pfam" id="PF00557">
    <property type="entry name" value="Peptidase_M24"/>
    <property type="match status" value="1"/>
</dbReference>
<dbReference type="SMART" id="SM01011">
    <property type="entry name" value="AMP_N"/>
    <property type="match status" value="1"/>
</dbReference>
<dbReference type="SUPFAM" id="SSF55920">
    <property type="entry name" value="Creatinase/aminopeptidase"/>
    <property type="match status" value="1"/>
</dbReference>
<dbReference type="SUPFAM" id="SSF53092">
    <property type="entry name" value="Creatinase/prolidase N-terminal domain"/>
    <property type="match status" value="1"/>
</dbReference>
<gene>
    <name type="primary">pepP</name>
    <name type="ORF">ACLA_079510</name>
</gene>
<feature type="chain" id="PRO_0000411862" description="Probable Xaa-Pro aminopeptidase pepP">
    <location>
        <begin position="1"/>
        <end position="466"/>
    </location>
</feature>
<feature type="binding site" evidence="1">
    <location>
        <position position="264"/>
    </location>
    <ligand>
        <name>Mn(2+)</name>
        <dbReference type="ChEBI" id="CHEBI:29035"/>
        <label>2</label>
    </ligand>
</feature>
<feature type="binding site" evidence="1">
    <location>
        <position position="275"/>
    </location>
    <ligand>
        <name>Mn(2+)</name>
        <dbReference type="ChEBI" id="CHEBI:29035"/>
        <label>1</label>
    </ligand>
</feature>
<feature type="binding site" evidence="1">
    <location>
        <position position="275"/>
    </location>
    <ligand>
        <name>Mn(2+)</name>
        <dbReference type="ChEBI" id="CHEBI:29035"/>
        <label>2</label>
    </ligand>
</feature>
<feature type="binding site" evidence="1">
    <location>
        <position position="398"/>
    </location>
    <ligand>
        <name>Mn(2+)</name>
        <dbReference type="ChEBI" id="CHEBI:29035"/>
        <label>1</label>
    </ligand>
</feature>
<feature type="binding site" evidence="1">
    <location>
        <position position="438"/>
    </location>
    <ligand>
        <name>Mn(2+)</name>
        <dbReference type="ChEBI" id="CHEBI:29035"/>
        <label>1</label>
    </ligand>
</feature>
<feature type="binding site" evidence="1">
    <location>
        <position position="438"/>
    </location>
    <ligand>
        <name>Mn(2+)</name>
        <dbReference type="ChEBI" id="CHEBI:29035"/>
        <label>2</label>
    </ligand>
</feature>
<name>AMPP3_ASPCL</name>
<protein>
    <recommendedName>
        <fullName>Probable Xaa-Pro aminopeptidase pepP</fullName>
        <ecNumber>3.4.11.9</ecNumber>
    </recommendedName>
    <alternativeName>
        <fullName>Aminoacylproline aminopeptidase</fullName>
    </alternativeName>
    <alternativeName>
        <fullName>Prolidase</fullName>
    </alternativeName>
</protein>
<comment type="function">
    <text evidence="1">Catalyzes the removal of a penultimate prolyl residue from the N-termini of peptides.</text>
</comment>
<comment type="catalytic activity">
    <reaction>
        <text>Release of any N-terminal amino acid, including proline, that is linked to proline, even from a dipeptide or tripeptide.</text>
        <dbReference type="EC" id="3.4.11.9"/>
    </reaction>
</comment>
<comment type="cofactor">
    <cofactor evidence="1">
        <name>Mn(2+)</name>
        <dbReference type="ChEBI" id="CHEBI:29035"/>
    </cofactor>
    <text evidence="1">Binds 2 manganese ions per subunit.</text>
</comment>
<comment type="similarity">
    <text evidence="2">Belongs to the peptidase M24B family.</text>
</comment>
<evidence type="ECO:0000250" key="1"/>
<evidence type="ECO:0000305" key="2"/>
<keyword id="KW-0031">Aminopeptidase</keyword>
<keyword id="KW-0378">Hydrolase</keyword>
<keyword id="KW-0464">Manganese</keyword>
<keyword id="KW-0479">Metal-binding</keyword>
<keyword id="KW-0482">Metalloprotease</keyword>
<keyword id="KW-0645">Protease</keyword>
<keyword id="KW-1185">Reference proteome</keyword>
<reference key="1">
    <citation type="journal article" date="2008" name="PLoS Genet.">
        <title>Genomic islands in the pathogenic filamentous fungus Aspergillus fumigatus.</title>
        <authorList>
            <person name="Fedorova N.D."/>
            <person name="Khaldi N."/>
            <person name="Joardar V.S."/>
            <person name="Maiti R."/>
            <person name="Amedeo P."/>
            <person name="Anderson M.J."/>
            <person name="Crabtree J."/>
            <person name="Silva J.C."/>
            <person name="Badger J.H."/>
            <person name="Albarraq A."/>
            <person name="Angiuoli S."/>
            <person name="Bussey H."/>
            <person name="Bowyer P."/>
            <person name="Cotty P.J."/>
            <person name="Dyer P.S."/>
            <person name="Egan A."/>
            <person name="Galens K."/>
            <person name="Fraser-Liggett C.M."/>
            <person name="Haas B.J."/>
            <person name="Inman J.M."/>
            <person name="Kent R."/>
            <person name="Lemieux S."/>
            <person name="Malavazi I."/>
            <person name="Orvis J."/>
            <person name="Roemer T."/>
            <person name="Ronning C.M."/>
            <person name="Sundaram J.P."/>
            <person name="Sutton G."/>
            <person name="Turner G."/>
            <person name="Venter J.C."/>
            <person name="White O.R."/>
            <person name="Whitty B.R."/>
            <person name="Youngman P."/>
            <person name="Wolfe K.H."/>
            <person name="Goldman G.H."/>
            <person name="Wortman J.R."/>
            <person name="Jiang B."/>
            <person name="Denning D.W."/>
            <person name="Nierman W.C."/>
        </authorList>
    </citation>
    <scope>NUCLEOTIDE SEQUENCE [LARGE SCALE GENOMIC DNA]</scope>
    <source>
        <strain>ATCC 1007 / CBS 513.65 / DSM 816 / NCTC 3887 / NRRL 1 / QM 1276 / 107</strain>
    </source>
</reference>
<organism>
    <name type="scientific">Aspergillus clavatus (strain ATCC 1007 / CBS 513.65 / DSM 816 / NCTC 3887 / NRRL 1 / QM 1276 / 107)</name>
    <dbReference type="NCBI Taxonomy" id="344612"/>
    <lineage>
        <taxon>Eukaryota</taxon>
        <taxon>Fungi</taxon>
        <taxon>Dikarya</taxon>
        <taxon>Ascomycota</taxon>
        <taxon>Pezizomycotina</taxon>
        <taxon>Eurotiomycetes</taxon>
        <taxon>Eurotiomycetidae</taxon>
        <taxon>Eurotiales</taxon>
        <taxon>Aspergillaceae</taxon>
        <taxon>Aspergillus</taxon>
        <taxon>Aspergillus subgen. Fumigati</taxon>
    </lineage>
</organism>
<accession>A1CSI0</accession>